<gene>
    <name evidence="1" type="primary">glmU</name>
    <name type="ordered locus">Avin_51920</name>
</gene>
<reference key="1">
    <citation type="journal article" date="2009" name="J. Bacteriol.">
        <title>Genome sequence of Azotobacter vinelandii, an obligate aerobe specialized to support diverse anaerobic metabolic processes.</title>
        <authorList>
            <person name="Setubal J.C."/>
            <person name="Dos Santos P."/>
            <person name="Goldman B.S."/>
            <person name="Ertesvaag H."/>
            <person name="Espin G."/>
            <person name="Rubio L.M."/>
            <person name="Valla S."/>
            <person name="Almeida N.F."/>
            <person name="Balasubramanian D."/>
            <person name="Cromes L."/>
            <person name="Curatti L."/>
            <person name="Du Z."/>
            <person name="Godsy E."/>
            <person name="Goodner B."/>
            <person name="Hellner-Burris K."/>
            <person name="Hernandez J.A."/>
            <person name="Houmiel K."/>
            <person name="Imperial J."/>
            <person name="Kennedy C."/>
            <person name="Larson T.J."/>
            <person name="Latreille P."/>
            <person name="Ligon L.S."/>
            <person name="Lu J."/>
            <person name="Maerk M."/>
            <person name="Miller N.M."/>
            <person name="Norton S."/>
            <person name="O'Carroll I.P."/>
            <person name="Paulsen I."/>
            <person name="Raulfs E.C."/>
            <person name="Roemer R."/>
            <person name="Rosser J."/>
            <person name="Segura D."/>
            <person name="Slater S."/>
            <person name="Stricklin S.L."/>
            <person name="Studholme D.J."/>
            <person name="Sun J."/>
            <person name="Viana C.J."/>
            <person name="Wallin E."/>
            <person name="Wang B."/>
            <person name="Wheeler C."/>
            <person name="Zhu H."/>
            <person name="Dean D.R."/>
            <person name="Dixon R."/>
            <person name="Wood D."/>
        </authorList>
    </citation>
    <scope>NUCLEOTIDE SEQUENCE [LARGE SCALE GENOMIC DNA]</scope>
    <source>
        <strain>DJ / ATCC BAA-1303</strain>
    </source>
</reference>
<accession>C1DMJ0</accession>
<dbReference type="EC" id="2.7.7.23" evidence="1"/>
<dbReference type="EC" id="2.3.1.157" evidence="1"/>
<dbReference type="EMBL" id="CP001157">
    <property type="protein sequence ID" value="ACO81267.1"/>
    <property type="molecule type" value="Genomic_DNA"/>
</dbReference>
<dbReference type="RefSeq" id="WP_012703620.1">
    <property type="nucleotide sequence ID" value="NC_012560.1"/>
</dbReference>
<dbReference type="SMR" id="C1DMJ0"/>
<dbReference type="STRING" id="322710.Avin_51920"/>
<dbReference type="EnsemblBacteria" id="ACO81267">
    <property type="protein sequence ID" value="ACO81267"/>
    <property type="gene ID" value="Avin_51920"/>
</dbReference>
<dbReference type="GeneID" id="88188008"/>
<dbReference type="KEGG" id="avn:Avin_51920"/>
<dbReference type="eggNOG" id="COG1207">
    <property type="taxonomic scope" value="Bacteria"/>
</dbReference>
<dbReference type="HOGENOM" id="CLU_029499_15_2_6"/>
<dbReference type="OrthoDB" id="9775031at2"/>
<dbReference type="UniPathway" id="UPA00113">
    <property type="reaction ID" value="UER00532"/>
</dbReference>
<dbReference type="UniPathway" id="UPA00113">
    <property type="reaction ID" value="UER00533"/>
</dbReference>
<dbReference type="UniPathway" id="UPA00973"/>
<dbReference type="Proteomes" id="UP000002424">
    <property type="component" value="Chromosome"/>
</dbReference>
<dbReference type="GO" id="GO:0005737">
    <property type="term" value="C:cytoplasm"/>
    <property type="evidence" value="ECO:0007669"/>
    <property type="project" value="UniProtKB-SubCell"/>
</dbReference>
<dbReference type="GO" id="GO:0016020">
    <property type="term" value="C:membrane"/>
    <property type="evidence" value="ECO:0007669"/>
    <property type="project" value="GOC"/>
</dbReference>
<dbReference type="GO" id="GO:0019134">
    <property type="term" value="F:glucosamine-1-phosphate N-acetyltransferase activity"/>
    <property type="evidence" value="ECO:0007669"/>
    <property type="project" value="UniProtKB-UniRule"/>
</dbReference>
<dbReference type="GO" id="GO:0000287">
    <property type="term" value="F:magnesium ion binding"/>
    <property type="evidence" value="ECO:0007669"/>
    <property type="project" value="UniProtKB-UniRule"/>
</dbReference>
<dbReference type="GO" id="GO:0003977">
    <property type="term" value="F:UDP-N-acetylglucosamine diphosphorylase activity"/>
    <property type="evidence" value="ECO:0007669"/>
    <property type="project" value="UniProtKB-UniRule"/>
</dbReference>
<dbReference type="GO" id="GO:0000902">
    <property type="term" value="P:cell morphogenesis"/>
    <property type="evidence" value="ECO:0007669"/>
    <property type="project" value="UniProtKB-UniRule"/>
</dbReference>
<dbReference type="GO" id="GO:0071555">
    <property type="term" value="P:cell wall organization"/>
    <property type="evidence" value="ECO:0007669"/>
    <property type="project" value="UniProtKB-KW"/>
</dbReference>
<dbReference type="GO" id="GO:0009245">
    <property type="term" value="P:lipid A biosynthetic process"/>
    <property type="evidence" value="ECO:0007669"/>
    <property type="project" value="UniProtKB-UniRule"/>
</dbReference>
<dbReference type="GO" id="GO:0009252">
    <property type="term" value="P:peptidoglycan biosynthetic process"/>
    <property type="evidence" value="ECO:0007669"/>
    <property type="project" value="UniProtKB-UniRule"/>
</dbReference>
<dbReference type="GO" id="GO:0008360">
    <property type="term" value="P:regulation of cell shape"/>
    <property type="evidence" value="ECO:0007669"/>
    <property type="project" value="UniProtKB-KW"/>
</dbReference>
<dbReference type="GO" id="GO:0006048">
    <property type="term" value="P:UDP-N-acetylglucosamine biosynthetic process"/>
    <property type="evidence" value="ECO:0007669"/>
    <property type="project" value="UniProtKB-UniPathway"/>
</dbReference>
<dbReference type="CDD" id="cd02540">
    <property type="entry name" value="GT2_GlmU_N_bac"/>
    <property type="match status" value="1"/>
</dbReference>
<dbReference type="CDD" id="cd03353">
    <property type="entry name" value="LbH_GlmU_C"/>
    <property type="match status" value="1"/>
</dbReference>
<dbReference type="Gene3D" id="2.160.10.10">
    <property type="entry name" value="Hexapeptide repeat proteins"/>
    <property type="match status" value="1"/>
</dbReference>
<dbReference type="Gene3D" id="3.90.550.10">
    <property type="entry name" value="Spore Coat Polysaccharide Biosynthesis Protein SpsA, Chain A"/>
    <property type="match status" value="1"/>
</dbReference>
<dbReference type="HAMAP" id="MF_01631">
    <property type="entry name" value="GlmU"/>
    <property type="match status" value="1"/>
</dbReference>
<dbReference type="InterPro" id="IPR005882">
    <property type="entry name" value="Bifunctional_GlmU"/>
</dbReference>
<dbReference type="InterPro" id="IPR050065">
    <property type="entry name" value="GlmU-like"/>
</dbReference>
<dbReference type="InterPro" id="IPR038009">
    <property type="entry name" value="GlmU_C_LbH"/>
</dbReference>
<dbReference type="InterPro" id="IPR001451">
    <property type="entry name" value="Hexapep"/>
</dbReference>
<dbReference type="InterPro" id="IPR025877">
    <property type="entry name" value="MobA-like_NTP_Trfase"/>
</dbReference>
<dbReference type="InterPro" id="IPR029044">
    <property type="entry name" value="Nucleotide-diphossugar_trans"/>
</dbReference>
<dbReference type="InterPro" id="IPR011004">
    <property type="entry name" value="Trimer_LpxA-like_sf"/>
</dbReference>
<dbReference type="NCBIfam" id="TIGR01173">
    <property type="entry name" value="glmU"/>
    <property type="match status" value="1"/>
</dbReference>
<dbReference type="NCBIfam" id="NF010933">
    <property type="entry name" value="PRK14353.1"/>
    <property type="match status" value="1"/>
</dbReference>
<dbReference type="PANTHER" id="PTHR43584:SF3">
    <property type="entry name" value="BIFUNCTIONAL PROTEIN GLMU"/>
    <property type="match status" value="1"/>
</dbReference>
<dbReference type="PANTHER" id="PTHR43584">
    <property type="entry name" value="NUCLEOTIDYL TRANSFERASE"/>
    <property type="match status" value="1"/>
</dbReference>
<dbReference type="Pfam" id="PF00132">
    <property type="entry name" value="Hexapep"/>
    <property type="match status" value="2"/>
</dbReference>
<dbReference type="Pfam" id="PF12804">
    <property type="entry name" value="NTP_transf_3"/>
    <property type="match status" value="1"/>
</dbReference>
<dbReference type="SUPFAM" id="SSF53448">
    <property type="entry name" value="Nucleotide-diphospho-sugar transferases"/>
    <property type="match status" value="1"/>
</dbReference>
<dbReference type="SUPFAM" id="SSF51161">
    <property type="entry name" value="Trimeric LpxA-like enzymes"/>
    <property type="match status" value="1"/>
</dbReference>
<evidence type="ECO:0000255" key="1">
    <source>
        <dbReference type="HAMAP-Rule" id="MF_01631"/>
    </source>
</evidence>
<comment type="function">
    <text evidence="1">Catalyzes the last two sequential reactions in the de novo biosynthetic pathway for UDP-N-acetylglucosamine (UDP-GlcNAc). The C-terminal domain catalyzes the transfer of acetyl group from acetyl coenzyme A to glucosamine-1-phosphate (GlcN-1-P) to produce N-acetylglucosamine-1-phosphate (GlcNAc-1-P), which is converted into UDP-GlcNAc by the transfer of uridine 5-monophosphate (from uridine 5-triphosphate), a reaction catalyzed by the N-terminal domain.</text>
</comment>
<comment type="catalytic activity">
    <reaction evidence="1">
        <text>alpha-D-glucosamine 1-phosphate + acetyl-CoA = N-acetyl-alpha-D-glucosamine 1-phosphate + CoA + H(+)</text>
        <dbReference type="Rhea" id="RHEA:13725"/>
        <dbReference type="ChEBI" id="CHEBI:15378"/>
        <dbReference type="ChEBI" id="CHEBI:57287"/>
        <dbReference type="ChEBI" id="CHEBI:57288"/>
        <dbReference type="ChEBI" id="CHEBI:57776"/>
        <dbReference type="ChEBI" id="CHEBI:58516"/>
        <dbReference type="EC" id="2.3.1.157"/>
    </reaction>
</comment>
<comment type="catalytic activity">
    <reaction evidence="1">
        <text>N-acetyl-alpha-D-glucosamine 1-phosphate + UTP + H(+) = UDP-N-acetyl-alpha-D-glucosamine + diphosphate</text>
        <dbReference type="Rhea" id="RHEA:13509"/>
        <dbReference type="ChEBI" id="CHEBI:15378"/>
        <dbReference type="ChEBI" id="CHEBI:33019"/>
        <dbReference type="ChEBI" id="CHEBI:46398"/>
        <dbReference type="ChEBI" id="CHEBI:57705"/>
        <dbReference type="ChEBI" id="CHEBI:57776"/>
        <dbReference type="EC" id="2.7.7.23"/>
    </reaction>
</comment>
<comment type="cofactor">
    <cofactor evidence="1">
        <name>Mg(2+)</name>
        <dbReference type="ChEBI" id="CHEBI:18420"/>
    </cofactor>
    <text evidence="1">Binds 1 Mg(2+) ion per subunit.</text>
</comment>
<comment type="pathway">
    <text evidence="1">Nucleotide-sugar biosynthesis; UDP-N-acetyl-alpha-D-glucosamine biosynthesis; N-acetyl-alpha-D-glucosamine 1-phosphate from alpha-D-glucosamine 6-phosphate (route II): step 2/2.</text>
</comment>
<comment type="pathway">
    <text evidence="1">Nucleotide-sugar biosynthesis; UDP-N-acetyl-alpha-D-glucosamine biosynthesis; UDP-N-acetyl-alpha-D-glucosamine from N-acetyl-alpha-D-glucosamine 1-phosphate: step 1/1.</text>
</comment>
<comment type="pathway">
    <text evidence="1">Bacterial outer membrane biogenesis; LPS lipid A biosynthesis.</text>
</comment>
<comment type="subunit">
    <text evidence="1">Homotrimer.</text>
</comment>
<comment type="subcellular location">
    <subcellularLocation>
        <location evidence="1">Cytoplasm</location>
    </subcellularLocation>
</comment>
<comment type="similarity">
    <text evidence="1">In the N-terminal section; belongs to the N-acetylglucosamine-1-phosphate uridyltransferase family.</text>
</comment>
<comment type="similarity">
    <text evidence="1">In the C-terminal section; belongs to the transferase hexapeptide repeat family.</text>
</comment>
<feature type="chain" id="PRO_1000215769" description="Bifunctional protein GlmU">
    <location>
        <begin position="1"/>
        <end position="454"/>
    </location>
</feature>
<feature type="region of interest" description="Pyrophosphorylase" evidence="1">
    <location>
        <begin position="1"/>
        <end position="226"/>
    </location>
</feature>
<feature type="region of interest" description="Linker" evidence="1">
    <location>
        <begin position="227"/>
        <end position="247"/>
    </location>
</feature>
<feature type="region of interest" description="N-acetyltransferase" evidence="1">
    <location>
        <begin position="248"/>
        <end position="454"/>
    </location>
</feature>
<feature type="active site" description="Proton acceptor" evidence="1">
    <location>
        <position position="360"/>
    </location>
</feature>
<feature type="binding site" evidence="1">
    <location>
        <begin position="8"/>
        <end position="11"/>
    </location>
    <ligand>
        <name>UDP-N-acetyl-alpha-D-glucosamine</name>
        <dbReference type="ChEBI" id="CHEBI:57705"/>
    </ligand>
</feature>
<feature type="binding site" evidence="1">
    <location>
        <position position="22"/>
    </location>
    <ligand>
        <name>UDP-N-acetyl-alpha-D-glucosamine</name>
        <dbReference type="ChEBI" id="CHEBI:57705"/>
    </ligand>
</feature>
<feature type="binding site" evidence="1">
    <location>
        <position position="73"/>
    </location>
    <ligand>
        <name>UDP-N-acetyl-alpha-D-glucosamine</name>
        <dbReference type="ChEBI" id="CHEBI:57705"/>
    </ligand>
</feature>
<feature type="binding site" evidence="1">
    <location>
        <begin position="78"/>
        <end position="79"/>
    </location>
    <ligand>
        <name>UDP-N-acetyl-alpha-D-glucosamine</name>
        <dbReference type="ChEBI" id="CHEBI:57705"/>
    </ligand>
</feature>
<feature type="binding site" evidence="1">
    <location>
        <begin position="99"/>
        <end position="101"/>
    </location>
    <ligand>
        <name>UDP-N-acetyl-alpha-D-glucosamine</name>
        <dbReference type="ChEBI" id="CHEBI:57705"/>
    </ligand>
</feature>
<feature type="binding site" evidence="1">
    <location>
        <position position="101"/>
    </location>
    <ligand>
        <name>Mg(2+)</name>
        <dbReference type="ChEBI" id="CHEBI:18420"/>
    </ligand>
</feature>
<feature type="binding site" evidence="1">
    <location>
        <position position="136"/>
    </location>
    <ligand>
        <name>UDP-N-acetyl-alpha-D-glucosamine</name>
        <dbReference type="ChEBI" id="CHEBI:57705"/>
    </ligand>
</feature>
<feature type="binding site" evidence="1">
    <location>
        <position position="151"/>
    </location>
    <ligand>
        <name>UDP-N-acetyl-alpha-D-glucosamine</name>
        <dbReference type="ChEBI" id="CHEBI:57705"/>
    </ligand>
</feature>
<feature type="binding site" evidence="1">
    <location>
        <position position="166"/>
    </location>
    <ligand>
        <name>UDP-N-acetyl-alpha-D-glucosamine</name>
        <dbReference type="ChEBI" id="CHEBI:57705"/>
    </ligand>
</feature>
<feature type="binding site" evidence="1">
    <location>
        <position position="224"/>
    </location>
    <ligand>
        <name>Mg(2+)</name>
        <dbReference type="ChEBI" id="CHEBI:18420"/>
    </ligand>
</feature>
<feature type="binding site" evidence="1">
    <location>
        <position position="224"/>
    </location>
    <ligand>
        <name>UDP-N-acetyl-alpha-D-glucosamine</name>
        <dbReference type="ChEBI" id="CHEBI:57705"/>
    </ligand>
</feature>
<feature type="binding site" evidence="1">
    <location>
        <position position="330"/>
    </location>
    <ligand>
        <name>UDP-N-acetyl-alpha-D-glucosamine</name>
        <dbReference type="ChEBI" id="CHEBI:57705"/>
    </ligand>
</feature>
<feature type="binding site" evidence="1">
    <location>
        <position position="348"/>
    </location>
    <ligand>
        <name>UDP-N-acetyl-alpha-D-glucosamine</name>
        <dbReference type="ChEBI" id="CHEBI:57705"/>
    </ligand>
</feature>
<feature type="binding site" evidence="1">
    <location>
        <position position="363"/>
    </location>
    <ligand>
        <name>UDP-N-acetyl-alpha-D-glucosamine</name>
        <dbReference type="ChEBI" id="CHEBI:57705"/>
    </ligand>
</feature>
<feature type="binding site" evidence="1">
    <location>
        <position position="374"/>
    </location>
    <ligand>
        <name>UDP-N-acetyl-alpha-D-glucosamine</name>
        <dbReference type="ChEBI" id="CHEBI:57705"/>
    </ligand>
</feature>
<feature type="binding site" evidence="1">
    <location>
        <position position="377"/>
    </location>
    <ligand>
        <name>acetyl-CoA</name>
        <dbReference type="ChEBI" id="CHEBI:57288"/>
    </ligand>
</feature>
<feature type="binding site" evidence="1">
    <location>
        <begin position="383"/>
        <end position="384"/>
    </location>
    <ligand>
        <name>acetyl-CoA</name>
        <dbReference type="ChEBI" id="CHEBI:57288"/>
    </ligand>
</feature>
<feature type="binding site" evidence="1">
    <location>
        <position position="402"/>
    </location>
    <ligand>
        <name>acetyl-CoA</name>
        <dbReference type="ChEBI" id="CHEBI:57288"/>
    </ligand>
</feature>
<feature type="binding site" evidence="1">
    <location>
        <position position="420"/>
    </location>
    <ligand>
        <name>acetyl-CoA</name>
        <dbReference type="ChEBI" id="CHEBI:57288"/>
    </ligand>
</feature>
<feature type="binding site" evidence="1">
    <location>
        <position position="437"/>
    </location>
    <ligand>
        <name>acetyl-CoA</name>
        <dbReference type="ChEBI" id="CHEBI:57288"/>
    </ligand>
</feature>
<organism>
    <name type="scientific">Azotobacter vinelandii (strain DJ / ATCC BAA-1303)</name>
    <dbReference type="NCBI Taxonomy" id="322710"/>
    <lineage>
        <taxon>Bacteria</taxon>
        <taxon>Pseudomonadati</taxon>
        <taxon>Pseudomonadota</taxon>
        <taxon>Gammaproteobacteria</taxon>
        <taxon>Pseudomonadales</taxon>
        <taxon>Pseudomonadaceae</taxon>
        <taxon>Azotobacter</taxon>
    </lineage>
</organism>
<protein>
    <recommendedName>
        <fullName evidence="1">Bifunctional protein GlmU</fullName>
    </recommendedName>
    <domain>
        <recommendedName>
            <fullName evidence="1">UDP-N-acetylglucosamine pyrophosphorylase</fullName>
            <ecNumber evidence="1">2.7.7.23</ecNumber>
        </recommendedName>
        <alternativeName>
            <fullName evidence="1">N-acetylglucosamine-1-phosphate uridyltransferase</fullName>
        </alternativeName>
    </domain>
    <domain>
        <recommendedName>
            <fullName evidence="1">Glucosamine-1-phosphate N-acetyltransferase</fullName>
            <ecNumber evidence="1">2.3.1.157</ecNumber>
        </recommendedName>
    </domain>
</protein>
<keyword id="KW-0012">Acyltransferase</keyword>
<keyword id="KW-0133">Cell shape</keyword>
<keyword id="KW-0961">Cell wall biogenesis/degradation</keyword>
<keyword id="KW-0963">Cytoplasm</keyword>
<keyword id="KW-0460">Magnesium</keyword>
<keyword id="KW-0479">Metal-binding</keyword>
<keyword id="KW-0511">Multifunctional enzyme</keyword>
<keyword id="KW-0548">Nucleotidyltransferase</keyword>
<keyword id="KW-0573">Peptidoglycan synthesis</keyword>
<keyword id="KW-0677">Repeat</keyword>
<keyword id="KW-0808">Transferase</keyword>
<sequence>MSLDIVILAAGQGTRMRSALPKVLHPVAGNSMLGHVVATARQLQPQGIHVVIGHGAERVRERLAADDLNFVLQAEQLGTGHAVAQALPALSAERVLILYGDVPLIEADTLRRLLAQVGPERLALLTVDLVDPSGYGRIVRDAAGRVVAIVEHKDASPEQRAICEGNTGILAVPGARLADWLGRLSNDNVQGEYYLTDVIAMAVADGLTIATEQPQDAMEVQGANDRLQLAQLERHYQSRVARRLMAQGVTLRDPARFDLRGEVEVGRDVLIDVNVILEGKVIIEDGVEIGPNCTIKDSTLRRGAQVKANSHLEGAELGEGADCGPFARLRPGAVLGAKAHVGNFVELKNAVLGEGAKAGHLSYLGDAEIGARTNIGAGTITCNYDGANKFRTVMGEDVFIGSNSALVAPVELGAGATTGAGSVITEDVPAGNLALGRGRQRNIEGWQRPTKQKK</sequence>
<proteinExistence type="inferred from homology"/>
<name>GLMU_AZOVD</name>